<name>CORO6_HUMAN</name>
<gene>
    <name type="primary">CORO6</name>
    <name type="ORF">PP1009</name>
    <name type="ORF">PP1782</name>
    <name type="ORF">PP1881</name>
</gene>
<reference key="1">
    <citation type="journal article" date="2004" name="Proc. Natl. Acad. Sci. U.S.A.">
        <title>Large-scale cDNA transfection screening for genes related to cancer development and progression.</title>
        <authorList>
            <person name="Wan D."/>
            <person name="Gong Y."/>
            <person name="Qin W."/>
            <person name="Zhang P."/>
            <person name="Li J."/>
            <person name="Wei L."/>
            <person name="Zhou X."/>
            <person name="Li H."/>
            <person name="Qiu X."/>
            <person name="Zhong F."/>
            <person name="He L."/>
            <person name="Yu J."/>
            <person name="Yao G."/>
            <person name="Jiang H."/>
            <person name="Qian L."/>
            <person name="Yu Y."/>
            <person name="Shu H."/>
            <person name="Chen X."/>
            <person name="Xu H."/>
            <person name="Guo M."/>
            <person name="Pan Z."/>
            <person name="Chen Y."/>
            <person name="Ge C."/>
            <person name="Yang S."/>
            <person name="Gu J."/>
        </authorList>
    </citation>
    <scope>NUCLEOTIDE SEQUENCE [LARGE SCALE MRNA] (ISOFORMS 3 AND 4)</scope>
</reference>
<reference key="2">
    <citation type="submission" date="2004-02" db="EMBL/GenBank/DDBJ databases">
        <authorList>
            <person name="Shen C."/>
            <person name="Wang C."/>
            <person name="Li H."/>
            <person name="Zhou G."/>
            <person name="Ke R."/>
            <person name="Zhong G."/>
            <person name="Lin L."/>
            <person name="Yang S."/>
        </authorList>
    </citation>
    <scope>NUCLEOTIDE SEQUENCE [LARGE SCALE MRNA] (ISOFORM 2)</scope>
</reference>
<reference key="3">
    <citation type="journal article" date="2004" name="Nat. Genet.">
        <title>Complete sequencing and characterization of 21,243 full-length human cDNAs.</title>
        <authorList>
            <person name="Ota T."/>
            <person name="Suzuki Y."/>
            <person name="Nishikawa T."/>
            <person name="Otsuki T."/>
            <person name="Sugiyama T."/>
            <person name="Irie R."/>
            <person name="Wakamatsu A."/>
            <person name="Hayashi K."/>
            <person name="Sato H."/>
            <person name="Nagai K."/>
            <person name="Kimura K."/>
            <person name="Makita H."/>
            <person name="Sekine M."/>
            <person name="Obayashi M."/>
            <person name="Nishi T."/>
            <person name="Shibahara T."/>
            <person name="Tanaka T."/>
            <person name="Ishii S."/>
            <person name="Yamamoto J."/>
            <person name="Saito K."/>
            <person name="Kawai Y."/>
            <person name="Isono Y."/>
            <person name="Nakamura Y."/>
            <person name="Nagahari K."/>
            <person name="Murakami K."/>
            <person name="Yasuda T."/>
            <person name="Iwayanagi T."/>
            <person name="Wagatsuma M."/>
            <person name="Shiratori A."/>
            <person name="Sudo H."/>
            <person name="Hosoiri T."/>
            <person name="Kaku Y."/>
            <person name="Kodaira H."/>
            <person name="Kondo H."/>
            <person name="Sugawara M."/>
            <person name="Takahashi M."/>
            <person name="Kanda K."/>
            <person name="Yokoi T."/>
            <person name="Furuya T."/>
            <person name="Kikkawa E."/>
            <person name="Omura Y."/>
            <person name="Abe K."/>
            <person name="Kamihara K."/>
            <person name="Katsuta N."/>
            <person name="Sato K."/>
            <person name="Tanikawa M."/>
            <person name="Yamazaki M."/>
            <person name="Ninomiya K."/>
            <person name="Ishibashi T."/>
            <person name="Yamashita H."/>
            <person name="Murakawa K."/>
            <person name="Fujimori K."/>
            <person name="Tanai H."/>
            <person name="Kimata M."/>
            <person name="Watanabe M."/>
            <person name="Hiraoka S."/>
            <person name="Chiba Y."/>
            <person name="Ishida S."/>
            <person name="Ono Y."/>
            <person name="Takiguchi S."/>
            <person name="Watanabe S."/>
            <person name="Yosida M."/>
            <person name="Hotuta T."/>
            <person name="Kusano J."/>
            <person name="Kanehori K."/>
            <person name="Takahashi-Fujii A."/>
            <person name="Hara H."/>
            <person name="Tanase T.-O."/>
            <person name="Nomura Y."/>
            <person name="Togiya S."/>
            <person name="Komai F."/>
            <person name="Hara R."/>
            <person name="Takeuchi K."/>
            <person name="Arita M."/>
            <person name="Imose N."/>
            <person name="Musashino K."/>
            <person name="Yuuki H."/>
            <person name="Oshima A."/>
            <person name="Sasaki N."/>
            <person name="Aotsuka S."/>
            <person name="Yoshikawa Y."/>
            <person name="Matsunawa H."/>
            <person name="Ichihara T."/>
            <person name="Shiohata N."/>
            <person name="Sano S."/>
            <person name="Moriya S."/>
            <person name="Momiyama H."/>
            <person name="Satoh N."/>
            <person name="Takami S."/>
            <person name="Terashima Y."/>
            <person name="Suzuki O."/>
            <person name="Nakagawa S."/>
            <person name="Senoh A."/>
            <person name="Mizoguchi H."/>
            <person name="Goto Y."/>
            <person name="Shimizu F."/>
            <person name="Wakebe H."/>
            <person name="Hishigaki H."/>
            <person name="Watanabe T."/>
            <person name="Sugiyama A."/>
            <person name="Takemoto M."/>
            <person name="Kawakami B."/>
            <person name="Yamazaki M."/>
            <person name="Watanabe K."/>
            <person name="Kumagai A."/>
            <person name="Itakura S."/>
            <person name="Fukuzumi Y."/>
            <person name="Fujimori Y."/>
            <person name="Komiyama M."/>
            <person name="Tashiro H."/>
            <person name="Tanigami A."/>
            <person name="Fujiwara T."/>
            <person name="Ono T."/>
            <person name="Yamada K."/>
            <person name="Fujii Y."/>
            <person name="Ozaki K."/>
            <person name="Hirao M."/>
            <person name="Ohmori Y."/>
            <person name="Kawabata A."/>
            <person name="Hikiji T."/>
            <person name="Kobatake N."/>
            <person name="Inagaki H."/>
            <person name="Ikema Y."/>
            <person name="Okamoto S."/>
            <person name="Okitani R."/>
            <person name="Kawakami T."/>
            <person name="Noguchi S."/>
            <person name="Itoh T."/>
            <person name="Shigeta K."/>
            <person name="Senba T."/>
            <person name="Matsumura K."/>
            <person name="Nakajima Y."/>
            <person name="Mizuno T."/>
            <person name="Morinaga M."/>
            <person name="Sasaki M."/>
            <person name="Togashi T."/>
            <person name="Oyama M."/>
            <person name="Hata H."/>
            <person name="Watanabe M."/>
            <person name="Komatsu T."/>
            <person name="Mizushima-Sugano J."/>
            <person name="Satoh T."/>
            <person name="Shirai Y."/>
            <person name="Takahashi Y."/>
            <person name="Nakagawa K."/>
            <person name="Okumura K."/>
            <person name="Nagase T."/>
            <person name="Nomura N."/>
            <person name="Kikuchi H."/>
            <person name="Masuho Y."/>
            <person name="Yamashita R."/>
            <person name="Nakai K."/>
            <person name="Yada T."/>
            <person name="Nakamura Y."/>
            <person name="Ohara O."/>
            <person name="Isogai T."/>
            <person name="Sugano S."/>
        </authorList>
    </citation>
    <scope>NUCLEOTIDE SEQUENCE [LARGE SCALE MRNA] (ISOFORM 3)</scope>
    <scope>NUCLEOTIDE SEQUENCE [LARGE SCALE MRNA] OF 32-472 (ISOFORM 5)</scope>
    <source>
        <tissue>Placenta</tissue>
        <tissue>Tongue</tissue>
    </source>
</reference>
<reference key="4">
    <citation type="journal article" date="2006" name="Nature">
        <title>DNA sequence of human chromosome 17 and analysis of rearrangement in the human lineage.</title>
        <authorList>
            <person name="Zody M.C."/>
            <person name="Garber M."/>
            <person name="Adams D.J."/>
            <person name="Sharpe T."/>
            <person name="Harrow J."/>
            <person name="Lupski J.R."/>
            <person name="Nicholson C."/>
            <person name="Searle S.M."/>
            <person name="Wilming L."/>
            <person name="Young S.K."/>
            <person name="Abouelleil A."/>
            <person name="Allen N.R."/>
            <person name="Bi W."/>
            <person name="Bloom T."/>
            <person name="Borowsky M.L."/>
            <person name="Bugalter B.E."/>
            <person name="Butler J."/>
            <person name="Chang J.L."/>
            <person name="Chen C.-K."/>
            <person name="Cook A."/>
            <person name="Corum B."/>
            <person name="Cuomo C.A."/>
            <person name="de Jong P.J."/>
            <person name="DeCaprio D."/>
            <person name="Dewar K."/>
            <person name="FitzGerald M."/>
            <person name="Gilbert J."/>
            <person name="Gibson R."/>
            <person name="Gnerre S."/>
            <person name="Goldstein S."/>
            <person name="Grafham D.V."/>
            <person name="Grocock R."/>
            <person name="Hafez N."/>
            <person name="Hagopian D.S."/>
            <person name="Hart E."/>
            <person name="Norman C.H."/>
            <person name="Humphray S."/>
            <person name="Jaffe D.B."/>
            <person name="Jones M."/>
            <person name="Kamal M."/>
            <person name="Khodiyar V.K."/>
            <person name="LaButti K."/>
            <person name="Laird G."/>
            <person name="Lehoczky J."/>
            <person name="Liu X."/>
            <person name="Lokyitsang T."/>
            <person name="Loveland J."/>
            <person name="Lui A."/>
            <person name="Macdonald P."/>
            <person name="Major J.E."/>
            <person name="Matthews L."/>
            <person name="Mauceli E."/>
            <person name="McCarroll S.A."/>
            <person name="Mihalev A.H."/>
            <person name="Mudge J."/>
            <person name="Nguyen C."/>
            <person name="Nicol R."/>
            <person name="O'Leary S.B."/>
            <person name="Osoegawa K."/>
            <person name="Schwartz D.C."/>
            <person name="Shaw-Smith C."/>
            <person name="Stankiewicz P."/>
            <person name="Steward C."/>
            <person name="Swarbreck D."/>
            <person name="Venkataraman V."/>
            <person name="Whittaker C.A."/>
            <person name="Yang X."/>
            <person name="Zimmer A.R."/>
            <person name="Bradley A."/>
            <person name="Hubbard T."/>
            <person name="Birren B.W."/>
            <person name="Rogers J."/>
            <person name="Lander E.S."/>
            <person name="Nusbaum C."/>
        </authorList>
    </citation>
    <scope>NUCLEOTIDE SEQUENCE [LARGE SCALE GENOMIC DNA]</scope>
</reference>
<reference key="5">
    <citation type="journal article" date="2004" name="Genome Res.">
        <title>The status, quality, and expansion of the NIH full-length cDNA project: the Mammalian Gene Collection (MGC).</title>
        <authorList>
            <consortium name="The MGC Project Team"/>
        </authorList>
    </citation>
    <scope>NUCLEOTIDE SEQUENCE [LARGE SCALE MRNA] (ISOFORM 4)</scope>
    <source>
        <tissue>Lymph</tissue>
    </source>
</reference>
<sequence>MSRRVVRQSKFRHVFGQAAKADQAYEDIRVSKVTWDSSFCAVNPKFLAIIVEAGGGGAFIVLPLAKTGRVDKNYPLVTGHTAPVLDIDWCPHNDNVIASASDDTTIMVWQIPDYTPMRNITEPIITLEGHSKRVGILSWHPTARNVLLSAGGDNVIIIWNVGTGEVLLSLDDMHPDVIHSVCWNSNGSLLATTCKDKTLRIIDPRKGQVVAEQARPHEGARPLRAVFTADGKLLSTGFSRMSERQLALWDPNNFEEPVALQEMDTSNGVLLPFYDPDSSIVYLCGKGDSSIRYFEITDEPPFVHYLNTFSSKEPQRGMGFMPKRGLDVSKCEIARFYKLHERKCEPIIMTVPRKSDLFQDDLYPDTPGPEPALEADEWLSGQDAEPVLISLRDGYVPPKHRELRVTKRNILDVRPPSGPRRSQSASDAPLSQQHTLETLLEEIKALRERVQAQEQRITALENMLCELVDGTD</sequence>
<keyword id="KW-0002">3D-structure</keyword>
<keyword id="KW-0025">Alternative splicing</keyword>
<keyword id="KW-0175">Coiled coil</keyword>
<keyword id="KW-1267">Proteomics identification</keyword>
<keyword id="KW-1185">Reference proteome</keyword>
<keyword id="KW-0677">Repeat</keyword>
<keyword id="KW-0853">WD repeat</keyword>
<accession>Q6QEF8</accession>
<accession>B3KU26</accession>
<accession>Q71MF3</accession>
<accession>Q8WYH7</accession>
<accession>Q96K02</accession>
<feature type="chain" id="PRO_0000259596" description="Coronin-6">
    <location>
        <begin position="1"/>
        <end position="472"/>
    </location>
</feature>
<feature type="repeat" description="WD 1">
    <location>
        <begin position="23"/>
        <end position="64"/>
    </location>
</feature>
<feature type="repeat" description="WD 2">
    <location>
        <begin position="72"/>
        <end position="111"/>
    </location>
</feature>
<feature type="repeat" description="WD 3">
    <location>
        <begin position="122"/>
        <end position="161"/>
    </location>
</feature>
<feature type="repeat" description="WD 4">
    <location>
        <begin position="165"/>
        <end position="204"/>
    </location>
</feature>
<feature type="repeat" description="WD 5">
    <location>
        <begin position="210"/>
        <end position="251"/>
    </location>
</feature>
<feature type="repeat" description="WD 6">
    <location>
        <begin position="256"/>
        <end position="296"/>
    </location>
</feature>
<feature type="region of interest" description="Disordered" evidence="2">
    <location>
        <begin position="407"/>
        <end position="433"/>
    </location>
</feature>
<feature type="coiled-coil region" evidence="1">
    <location>
        <begin position="430"/>
        <end position="464"/>
    </location>
</feature>
<feature type="compositionally biased region" description="Polar residues" evidence="2">
    <location>
        <begin position="420"/>
        <end position="433"/>
    </location>
</feature>
<feature type="splice variant" id="VSP_021484" description="In isoform 2 and isoform 3." evidence="3 5 6">
    <original>MSRRVVRQSKFRHVFGQAAKADQAYEDIRVSKVTWDSSFCAVNPKFLAIIVEAGGGGAFIVLPLAKTGRVDKNYPLVTGHTAPVLDIDWCPHNDNVIASASDDTTIMVWQIPDYTPMRNITEPIITLEGHSKRVGILSWHPTARNVLLSAGGDNVIIIWNVGTGEVLLSLDDMHPDVIHSVCWNSNGSLLATTCKDKTLRIIDPRKGQVVAEQARPHEGARPLRAVFTADGKLLSTGFSRMSERQLALWDP</original>
    <variation>MCRGGGAMCAGEEERCAQGRGLQLWSLEVWGIGFGKARKRKGASGGPEVAREGGAGLVTPPVLGQ</variation>
    <location>
        <begin position="1"/>
        <end position="251"/>
    </location>
</feature>
<feature type="splice variant" id="VSP_021485" description="In isoform 4." evidence="4 5">
    <original>MSRRVVRQSKFRHVFGQAAKADQAYEDIRVSKVTWDSSFCAVNPKFLAIIVEAGGGGAFIVLPLAKTGRVDKNYPLVTGHTAPVLDIDWCPHNDNVIASASDDTTIMVWQIPDYTPMRNITEPIITLEGHSKRVGILSWHPTARNVLLSAGGDNVIIIWNVGTGEVLLSLDDMHPDVIHSVCWNSNGSLLATTCKDKTLRIIDPRKGQVVAEQARPHEGARPLRAVFTADGKLLSTGFSRMSERQLALWDP</original>
    <variation>MPSPWGWFAVTACGAQR</variation>
    <location>
        <begin position="1"/>
        <end position="251"/>
    </location>
</feature>
<feature type="splice variant" id="VSP_039874" description="In isoform 5." evidence="3">
    <original>QARPHEGARPLRAVFTADGKLLSTGFSRMSERQLA</original>
    <variation>RFAAHEGMRPMRAVFTRQGHIFTTGFTRMSQRELG</variation>
    <location>
        <begin position="213"/>
        <end position="247"/>
    </location>
</feature>
<feature type="splice variant" id="VSP_021486" description="In isoform 3 and isoform 4." evidence="3 4 5">
    <location>
        <position position="433"/>
    </location>
</feature>
<feature type="sequence conflict" description="In Ref. 3; BAG53288." evidence="7" ref="3">
    <original>S</original>
    <variation>I</variation>
    <location>
        <position position="266"/>
    </location>
</feature>
<feature type="turn" evidence="8">
    <location>
        <begin position="10"/>
        <end position="13"/>
    </location>
</feature>
<feature type="strand" evidence="8">
    <location>
        <begin position="15"/>
        <end position="18"/>
    </location>
</feature>
<feature type="helix" evidence="8">
    <location>
        <begin position="21"/>
        <end position="23"/>
    </location>
</feature>
<feature type="strand" evidence="8">
    <location>
        <begin position="24"/>
        <end position="27"/>
    </location>
</feature>
<feature type="strand" evidence="8">
    <location>
        <begin position="39"/>
        <end position="42"/>
    </location>
</feature>
<feature type="strand" evidence="8">
    <location>
        <begin position="44"/>
        <end position="51"/>
    </location>
</feature>
<feature type="strand" evidence="8">
    <location>
        <begin position="58"/>
        <end position="63"/>
    </location>
</feature>
<feature type="strand" evidence="8">
    <location>
        <begin position="84"/>
        <end position="89"/>
    </location>
</feature>
<feature type="strand" evidence="8">
    <location>
        <begin position="96"/>
        <end position="101"/>
    </location>
</feature>
<feature type="strand" evidence="8">
    <location>
        <begin position="106"/>
        <end position="110"/>
    </location>
</feature>
<feature type="strand" evidence="8">
    <location>
        <begin position="124"/>
        <end position="127"/>
    </location>
</feature>
<feature type="strand" evidence="8">
    <location>
        <begin position="134"/>
        <end position="139"/>
    </location>
</feature>
<feature type="strand" evidence="8">
    <location>
        <begin position="141"/>
        <end position="143"/>
    </location>
</feature>
<feature type="strand" evidence="8">
    <location>
        <begin position="146"/>
        <end position="151"/>
    </location>
</feature>
<feature type="strand" evidence="8">
    <location>
        <begin position="156"/>
        <end position="160"/>
    </location>
</feature>
<feature type="turn" evidence="8">
    <location>
        <begin position="161"/>
        <end position="163"/>
    </location>
</feature>
<feature type="strand" evidence="8">
    <location>
        <begin position="166"/>
        <end position="170"/>
    </location>
</feature>
<feature type="strand" evidence="8">
    <location>
        <begin position="172"/>
        <end position="176"/>
    </location>
</feature>
<feature type="strand" evidence="8">
    <location>
        <begin position="178"/>
        <end position="183"/>
    </location>
</feature>
<feature type="strand" evidence="8">
    <location>
        <begin position="190"/>
        <end position="194"/>
    </location>
</feature>
<feature type="strand" evidence="8">
    <location>
        <begin position="199"/>
        <end position="203"/>
    </location>
</feature>
<feature type="turn" evidence="8">
    <location>
        <begin position="204"/>
        <end position="207"/>
    </location>
</feature>
<feature type="strand" evidence="8">
    <location>
        <begin position="208"/>
        <end position="212"/>
    </location>
</feature>
<feature type="strand" evidence="8">
    <location>
        <begin position="221"/>
        <end position="227"/>
    </location>
</feature>
<feature type="strand" evidence="8">
    <location>
        <begin position="233"/>
        <end position="238"/>
    </location>
</feature>
<feature type="strand" evidence="8">
    <location>
        <begin position="244"/>
        <end position="249"/>
    </location>
</feature>
<feature type="strand" evidence="8">
    <location>
        <begin position="258"/>
        <end position="262"/>
    </location>
</feature>
<feature type="strand" evidence="8">
    <location>
        <begin position="271"/>
        <end position="275"/>
    </location>
</feature>
<feature type="turn" evidence="8">
    <location>
        <begin position="276"/>
        <end position="279"/>
    </location>
</feature>
<feature type="strand" evidence="8">
    <location>
        <begin position="280"/>
        <end position="284"/>
    </location>
</feature>
<feature type="strand" evidence="8">
    <location>
        <begin position="291"/>
        <end position="296"/>
    </location>
</feature>
<feature type="strand" evidence="8">
    <location>
        <begin position="302"/>
        <end position="309"/>
    </location>
</feature>
<feature type="strand" evidence="8">
    <location>
        <begin position="316"/>
        <end position="320"/>
    </location>
</feature>
<feature type="helix" evidence="8">
    <location>
        <begin position="323"/>
        <end position="325"/>
    </location>
</feature>
<feature type="helix" evidence="8">
    <location>
        <begin position="328"/>
        <end position="330"/>
    </location>
</feature>
<feature type="strand" evidence="8">
    <location>
        <begin position="332"/>
        <end position="339"/>
    </location>
</feature>
<feature type="strand" evidence="8">
    <location>
        <begin position="341"/>
        <end position="350"/>
    </location>
</feature>
<feature type="turn" evidence="8">
    <location>
        <begin position="360"/>
        <end position="362"/>
    </location>
</feature>
<feature type="helix" evidence="8">
    <location>
        <begin position="375"/>
        <end position="379"/>
    </location>
</feature>
<feature type="helix" evidence="8">
    <location>
        <begin position="391"/>
        <end position="393"/>
    </location>
</feature>
<evidence type="ECO:0000255" key="1"/>
<evidence type="ECO:0000256" key="2">
    <source>
        <dbReference type="SAM" id="MobiDB-lite"/>
    </source>
</evidence>
<evidence type="ECO:0000303" key="3">
    <source>
    </source>
</evidence>
<evidence type="ECO:0000303" key="4">
    <source>
    </source>
</evidence>
<evidence type="ECO:0000303" key="5">
    <source>
    </source>
</evidence>
<evidence type="ECO:0000303" key="6">
    <source ref="2"/>
</evidence>
<evidence type="ECO:0000305" key="7"/>
<evidence type="ECO:0007829" key="8">
    <source>
        <dbReference type="PDB" id="7KYX"/>
    </source>
</evidence>
<proteinExistence type="evidence at protein level"/>
<comment type="interaction">
    <interactant intactId="EBI-10254194">
        <id>Q6QEF8</id>
    </interactant>
    <interactant intactId="EBI-465781">
        <id>Q9UL45</id>
        <label>BLOC1S6</label>
    </interactant>
    <organismsDiffer>false</organismsDiffer>
    <experiments>3</experiments>
</comment>
<comment type="interaction">
    <interactant intactId="EBI-10699285">
        <id>Q6QEF8-4</id>
    </interactant>
    <interactant intactId="EBI-12275524">
        <id>P23560-2</id>
        <label>BDNF</label>
    </interactant>
    <organismsDiffer>false</organismsDiffer>
    <experiments>3</experiments>
</comment>
<comment type="interaction">
    <interactant intactId="EBI-10699285">
        <id>Q6QEF8-4</id>
    </interactant>
    <interactant intactId="EBI-739060">
        <id>P02511</id>
        <label>CRYAB</label>
    </interactant>
    <organismsDiffer>false</organismsDiffer>
    <experiments>3</experiments>
</comment>
<comment type="interaction">
    <interactant intactId="EBI-10699285">
        <id>Q6QEF8-4</id>
    </interactant>
    <interactant intactId="EBI-296047">
        <id>P07900</id>
        <label>HSP90AA1</label>
    </interactant>
    <organismsDiffer>false</organismsDiffer>
    <experiments>3</experiments>
</comment>
<comment type="alternative products">
    <event type="alternative splicing"/>
    <isoform>
        <id>Q6QEF8-1</id>
        <name>1</name>
        <sequence type="displayed"/>
    </isoform>
    <isoform>
        <id>Q6QEF8-2</id>
        <name>2</name>
        <sequence type="described" ref="VSP_021484"/>
    </isoform>
    <isoform>
        <id>Q6QEF8-3</id>
        <name>3</name>
        <sequence type="described" ref="VSP_021484 VSP_021486"/>
    </isoform>
    <isoform>
        <id>Q6QEF8-4</id>
        <name>4</name>
        <sequence type="described" ref="VSP_021485 VSP_021486"/>
    </isoform>
    <isoform>
        <id>Q6QEF8-5</id>
        <name>5</name>
        <sequence type="described" ref="VSP_039874"/>
    </isoform>
</comment>
<comment type="sequence caution" evidence="7">
    <conflict type="erroneous translation">
        <sequence resource="EMBL-CDS" id="AAG22467"/>
    </conflict>
    <text>Wrong choice of frame.</text>
</comment>
<comment type="sequence caution" evidence="7">
    <conflict type="erroneous initiation">
        <sequence resource="EMBL-CDS" id="BAG53288"/>
    </conflict>
    <text>Truncated N-terminus.</text>
</comment>
<organism>
    <name type="scientific">Homo sapiens</name>
    <name type="common">Human</name>
    <dbReference type="NCBI Taxonomy" id="9606"/>
    <lineage>
        <taxon>Eukaryota</taxon>
        <taxon>Metazoa</taxon>
        <taxon>Chordata</taxon>
        <taxon>Craniata</taxon>
        <taxon>Vertebrata</taxon>
        <taxon>Euteleostomi</taxon>
        <taxon>Mammalia</taxon>
        <taxon>Eutheria</taxon>
        <taxon>Euarchontoglires</taxon>
        <taxon>Primates</taxon>
        <taxon>Haplorrhini</taxon>
        <taxon>Catarrhini</taxon>
        <taxon>Hominidae</taxon>
        <taxon>Homo</taxon>
    </lineage>
</organism>
<protein>
    <recommendedName>
        <fullName>Coronin-6</fullName>
    </recommendedName>
    <alternativeName>
        <fullName>Coronin-like protein E</fullName>
        <shortName>Clipin-E</shortName>
    </alternativeName>
</protein>
<dbReference type="EMBL" id="AF193039">
    <property type="protein sequence ID" value="AAG22467.1"/>
    <property type="status" value="ALT_SEQ"/>
    <property type="molecule type" value="mRNA"/>
</dbReference>
<dbReference type="EMBL" id="AF447884">
    <property type="protein sequence ID" value="AAQ04659.1"/>
    <property type="molecule type" value="mRNA"/>
</dbReference>
<dbReference type="EMBL" id="AF447885">
    <property type="protein sequence ID" value="AAQ04660.1"/>
    <property type="molecule type" value="mRNA"/>
</dbReference>
<dbReference type="EMBL" id="AY545070">
    <property type="protein sequence ID" value="AAS48630.1"/>
    <property type="molecule type" value="mRNA"/>
</dbReference>
<dbReference type="EMBL" id="AK027777">
    <property type="protein sequence ID" value="BAB55360.1"/>
    <property type="molecule type" value="mRNA"/>
</dbReference>
<dbReference type="EMBL" id="AK096431">
    <property type="protein sequence ID" value="BAG53288.1"/>
    <property type="status" value="ALT_INIT"/>
    <property type="molecule type" value="mRNA"/>
</dbReference>
<dbReference type="EMBL" id="AC104564">
    <property type="status" value="NOT_ANNOTATED_CDS"/>
    <property type="molecule type" value="Genomic_DNA"/>
</dbReference>
<dbReference type="EMBL" id="BC064514">
    <property type="protein sequence ID" value="AAH64514.1"/>
    <property type="molecule type" value="mRNA"/>
</dbReference>
<dbReference type="CCDS" id="CCDS11252.2">
    <molecule id="Q6QEF8-5"/>
</dbReference>
<dbReference type="RefSeq" id="NP_001338230.1">
    <molecule id="Q6QEF8-4"/>
    <property type="nucleotide sequence ID" value="NM_001351301.3"/>
</dbReference>
<dbReference type="RefSeq" id="NP_001338231.1">
    <molecule id="Q6QEF8-4"/>
    <property type="nucleotide sequence ID" value="NM_001351302.3"/>
</dbReference>
<dbReference type="RefSeq" id="NP_001375360.1">
    <molecule id="Q6QEF8-5"/>
    <property type="nucleotide sequence ID" value="NM_001388431.1"/>
</dbReference>
<dbReference type="RefSeq" id="NP_116243.2">
    <molecule id="Q6QEF8-5"/>
    <property type="nucleotide sequence ID" value="NM_032854.4"/>
</dbReference>
<dbReference type="RefSeq" id="XP_005258104.1">
    <property type="nucleotide sequence ID" value="XM_005258047.3"/>
</dbReference>
<dbReference type="RefSeq" id="XP_005258113.1">
    <property type="nucleotide sequence ID" value="XM_005258056.4"/>
</dbReference>
<dbReference type="PDB" id="7KYX">
    <property type="method" value="X-ray"/>
    <property type="resolution" value="1.63 A"/>
    <property type="chains" value="A=1-409"/>
</dbReference>
<dbReference type="PDBsum" id="7KYX"/>
<dbReference type="SMR" id="Q6QEF8"/>
<dbReference type="BioGRID" id="124374">
    <property type="interactions" value="56"/>
</dbReference>
<dbReference type="FunCoup" id="Q6QEF8">
    <property type="interactions" value="127"/>
</dbReference>
<dbReference type="IntAct" id="Q6QEF8">
    <property type="interactions" value="35"/>
</dbReference>
<dbReference type="MINT" id="Q6QEF8"/>
<dbReference type="STRING" id="9606.ENSP00000344562"/>
<dbReference type="GlyGen" id="Q6QEF8">
    <property type="glycosylation" value="1 site, 1 O-linked glycan (1 site)"/>
</dbReference>
<dbReference type="iPTMnet" id="Q6QEF8"/>
<dbReference type="PhosphoSitePlus" id="Q6QEF8"/>
<dbReference type="BioMuta" id="CORO6"/>
<dbReference type="DMDM" id="119369490"/>
<dbReference type="jPOST" id="Q6QEF8"/>
<dbReference type="MassIVE" id="Q6QEF8"/>
<dbReference type="PaxDb" id="9606-ENSP00000344562"/>
<dbReference type="PeptideAtlas" id="Q6QEF8"/>
<dbReference type="ProteomicsDB" id="67283">
    <molecule id="Q6QEF8-1"/>
</dbReference>
<dbReference type="ProteomicsDB" id="67284">
    <molecule id="Q6QEF8-2"/>
</dbReference>
<dbReference type="ProteomicsDB" id="67285">
    <molecule id="Q6QEF8-3"/>
</dbReference>
<dbReference type="ProteomicsDB" id="67286">
    <molecule id="Q6QEF8-4"/>
</dbReference>
<dbReference type="ProteomicsDB" id="67287">
    <molecule id="Q6QEF8-5"/>
</dbReference>
<dbReference type="Antibodypedia" id="54318">
    <property type="antibodies" value="120 antibodies from 16 providers"/>
</dbReference>
<dbReference type="DNASU" id="84940"/>
<dbReference type="Ensembl" id="ENST00000345068.9">
    <molecule id="Q6QEF8-5"/>
    <property type="protein sequence ID" value="ENSP00000344562.5"/>
    <property type="gene ID" value="ENSG00000167549.19"/>
</dbReference>
<dbReference type="Ensembl" id="ENST00000388767.8">
    <molecule id="Q6QEF8-5"/>
    <property type="protein sequence ID" value="ENSP00000373419.3"/>
    <property type="gene ID" value="ENSG00000167549.19"/>
</dbReference>
<dbReference type="GeneID" id="84940"/>
<dbReference type="KEGG" id="hsa:84940"/>
<dbReference type="MANE-Select" id="ENST00000388767.8">
    <molecule id="Q6QEF8-5"/>
    <property type="protein sequence ID" value="ENSP00000373419.3"/>
    <property type="RefSeq nucleotide sequence ID" value="NM_032854.4"/>
    <property type="RefSeq protein sequence ID" value="NP_116243.2"/>
</dbReference>
<dbReference type="UCSC" id="uc002hel.2">
    <molecule id="Q6QEF8-1"/>
    <property type="organism name" value="human"/>
</dbReference>
<dbReference type="AGR" id="HGNC:21356"/>
<dbReference type="CTD" id="84940"/>
<dbReference type="DisGeNET" id="84940"/>
<dbReference type="GeneCards" id="CORO6"/>
<dbReference type="HGNC" id="HGNC:21356">
    <property type="gene designation" value="CORO6"/>
</dbReference>
<dbReference type="HPA" id="ENSG00000167549">
    <property type="expression patterns" value="Tissue enhanced (skeletal muscle, tongue)"/>
</dbReference>
<dbReference type="neXtProt" id="NX_Q6QEF8"/>
<dbReference type="OpenTargets" id="ENSG00000167549"/>
<dbReference type="PharmGKB" id="PA134869901"/>
<dbReference type="VEuPathDB" id="HostDB:ENSG00000167549"/>
<dbReference type="eggNOG" id="KOG0303">
    <property type="taxonomic scope" value="Eukaryota"/>
</dbReference>
<dbReference type="GeneTree" id="ENSGT00940000159328"/>
<dbReference type="InParanoid" id="Q6QEF8"/>
<dbReference type="OMA" id="YPPILMH"/>
<dbReference type="OrthoDB" id="1850764at2759"/>
<dbReference type="PAN-GO" id="Q6QEF8">
    <property type="GO annotations" value="3 GO annotations based on evolutionary models"/>
</dbReference>
<dbReference type="PhylomeDB" id="Q6QEF8"/>
<dbReference type="TreeFam" id="TF314280"/>
<dbReference type="PathwayCommons" id="Q6QEF8"/>
<dbReference type="SignaLink" id="Q6QEF8"/>
<dbReference type="BioGRID-ORCS" id="84940">
    <property type="hits" value="24 hits in 1146 CRISPR screens"/>
</dbReference>
<dbReference type="ChiTaRS" id="CORO6">
    <property type="organism name" value="human"/>
</dbReference>
<dbReference type="GenomeRNAi" id="84940"/>
<dbReference type="Pharos" id="Q6QEF8">
    <property type="development level" value="Tbio"/>
</dbReference>
<dbReference type="PRO" id="PR:Q6QEF8"/>
<dbReference type="Proteomes" id="UP000005640">
    <property type="component" value="Chromosome 17"/>
</dbReference>
<dbReference type="RNAct" id="Q6QEF8">
    <property type="molecule type" value="protein"/>
</dbReference>
<dbReference type="Bgee" id="ENSG00000167549">
    <property type="expression patterns" value="Expressed in gastrocnemius and 143 other cell types or tissues"/>
</dbReference>
<dbReference type="ExpressionAtlas" id="Q6QEF8">
    <property type="expression patterns" value="baseline and differential"/>
</dbReference>
<dbReference type="GO" id="GO:0051015">
    <property type="term" value="F:actin filament binding"/>
    <property type="evidence" value="ECO:0000318"/>
    <property type="project" value="GO_Central"/>
</dbReference>
<dbReference type="GO" id="GO:0007015">
    <property type="term" value="P:actin filament organization"/>
    <property type="evidence" value="ECO:0000318"/>
    <property type="project" value="GO_Central"/>
</dbReference>
<dbReference type="GO" id="GO:0016477">
    <property type="term" value="P:cell migration"/>
    <property type="evidence" value="ECO:0000318"/>
    <property type="project" value="GO_Central"/>
</dbReference>
<dbReference type="FunFam" id="2.130.10.10:FF:000003">
    <property type="entry name" value="Coronin"/>
    <property type="match status" value="1"/>
</dbReference>
<dbReference type="Gene3D" id="2.130.10.10">
    <property type="entry name" value="YVTN repeat-like/Quinoprotein amine dehydrogenase"/>
    <property type="match status" value="1"/>
</dbReference>
<dbReference type="InterPro" id="IPR015505">
    <property type="entry name" value="Coronin"/>
</dbReference>
<dbReference type="InterPro" id="IPR015048">
    <property type="entry name" value="DUF1899"/>
</dbReference>
<dbReference type="InterPro" id="IPR015943">
    <property type="entry name" value="WD40/YVTN_repeat-like_dom_sf"/>
</dbReference>
<dbReference type="InterPro" id="IPR019775">
    <property type="entry name" value="WD40_repeat_CS"/>
</dbReference>
<dbReference type="InterPro" id="IPR036322">
    <property type="entry name" value="WD40_repeat_dom_sf"/>
</dbReference>
<dbReference type="InterPro" id="IPR001680">
    <property type="entry name" value="WD40_rpt"/>
</dbReference>
<dbReference type="PANTHER" id="PTHR10856">
    <property type="entry name" value="CORONIN"/>
    <property type="match status" value="1"/>
</dbReference>
<dbReference type="PANTHER" id="PTHR10856:SF23">
    <property type="entry name" value="CORONIN-6"/>
    <property type="match status" value="1"/>
</dbReference>
<dbReference type="Pfam" id="PF08953">
    <property type="entry name" value="DUF1899"/>
    <property type="match status" value="1"/>
</dbReference>
<dbReference type="Pfam" id="PF00400">
    <property type="entry name" value="WD40"/>
    <property type="match status" value="3"/>
</dbReference>
<dbReference type="Pfam" id="PF16300">
    <property type="entry name" value="WD40_4"/>
    <property type="match status" value="1"/>
</dbReference>
<dbReference type="SMART" id="SM01166">
    <property type="entry name" value="DUF1899"/>
    <property type="match status" value="1"/>
</dbReference>
<dbReference type="SMART" id="SM01167">
    <property type="entry name" value="DUF1900"/>
    <property type="match status" value="1"/>
</dbReference>
<dbReference type="SMART" id="SM00320">
    <property type="entry name" value="WD40"/>
    <property type="match status" value="3"/>
</dbReference>
<dbReference type="SUPFAM" id="SSF50978">
    <property type="entry name" value="WD40 repeat-like"/>
    <property type="match status" value="1"/>
</dbReference>
<dbReference type="PROSITE" id="PS00678">
    <property type="entry name" value="WD_REPEATS_1"/>
    <property type="match status" value="1"/>
</dbReference>
<dbReference type="PROSITE" id="PS50082">
    <property type="entry name" value="WD_REPEATS_2"/>
    <property type="match status" value="3"/>
</dbReference>
<dbReference type="PROSITE" id="PS50294">
    <property type="entry name" value="WD_REPEATS_REGION"/>
    <property type="match status" value="1"/>
</dbReference>